<proteinExistence type="inferred from homology"/>
<accession>B1ZJR5</accession>
<reference key="1">
    <citation type="submission" date="2008-04" db="EMBL/GenBank/DDBJ databases">
        <title>Complete sequence of chromosome of Methylobacterium populi BJ001.</title>
        <authorList>
            <consortium name="US DOE Joint Genome Institute"/>
            <person name="Copeland A."/>
            <person name="Lucas S."/>
            <person name="Lapidus A."/>
            <person name="Glavina del Rio T."/>
            <person name="Dalin E."/>
            <person name="Tice H."/>
            <person name="Bruce D."/>
            <person name="Goodwin L."/>
            <person name="Pitluck S."/>
            <person name="Chertkov O."/>
            <person name="Brettin T."/>
            <person name="Detter J.C."/>
            <person name="Han C."/>
            <person name="Kuske C.R."/>
            <person name="Schmutz J."/>
            <person name="Larimer F."/>
            <person name="Land M."/>
            <person name="Hauser L."/>
            <person name="Kyrpides N."/>
            <person name="Mikhailova N."/>
            <person name="Marx C."/>
            <person name="Richardson P."/>
        </authorList>
    </citation>
    <scope>NUCLEOTIDE SEQUENCE [LARGE SCALE GENOMIC DNA]</scope>
    <source>
        <strain>ATCC BAA-705 / NCIMB 13946 / BJ001</strain>
    </source>
</reference>
<organism>
    <name type="scientific">Methylorubrum populi (strain ATCC BAA-705 / NCIMB 13946 / BJ001)</name>
    <name type="common">Methylobacterium populi</name>
    <dbReference type="NCBI Taxonomy" id="441620"/>
    <lineage>
        <taxon>Bacteria</taxon>
        <taxon>Pseudomonadati</taxon>
        <taxon>Pseudomonadota</taxon>
        <taxon>Alphaproteobacteria</taxon>
        <taxon>Hyphomicrobiales</taxon>
        <taxon>Methylobacteriaceae</taxon>
        <taxon>Methylorubrum</taxon>
    </lineage>
</organism>
<protein>
    <recommendedName>
        <fullName evidence="1">tRNA-2-methylthio-N(6)-dimethylallyladenosine synthase</fullName>
        <ecNumber evidence="1">2.8.4.3</ecNumber>
    </recommendedName>
    <alternativeName>
        <fullName evidence="1">(Dimethylallyl)adenosine tRNA methylthiotransferase MiaB</fullName>
    </alternativeName>
    <alternativeName>
        <fullName evidence="1">tRNA-i(6)A37 methylthiotransferase</fullName>
    </alternativeName>
</protein>
<feature type="chain" id="PRO_0000374378" description="tRNA-2-methylthio-N(6)-dimethylallyladenosine synthase">
    <location>
        <begin position="1"/>
        <end position="446"/>
    </location>
</feature>
<feature type="domain" description="MTTase N-terminal" evidence="1">
    <location>
        <begin position="2"/>
        <end position="122"/>
    </location>
</feature>
<feature type="domain" description="Radical SAM core" evidence="2">
    <location>
        <begin position="143"/>
        <end position="375"/>
    </location>
</feature>
<feature type="domain" description="TRAM" evidence="1">
    <location>
        <begin position="378"/>
        <end position="440"/>
    </location>
</feature>
<feature type="binding site" evidence="1">
    <location>
        <position position="11"/>
    </location>
    <ligand>
        <name>[4Fe-4S] cluster</name>
        <dbReference type="ChEBI" id="CHEBI:49883"/>
        <label>1</label>
    </ligand>
</feature>
<feature type="binding site" evidence="1">
    <location>
        <position position="47"/>
    </location>
    <ligand>
        <name>[4Fe-4S] cluster</name>
        <dbReference type="ChEBI" id="CHEBI:49883"/>
        <label>1</label>
    </ligand>
</feature>
<feature type="binding site" evidence="1">
    <location>
        <position position="85"/>
    </location>
    <ligand>
        <name>[4Fe-4S] cluster</name>
        <dbReference type="ChEBI" id="CHEBI:49883"/>
        <label>1</label>
    </ligand>
</feature>
<feature type="binding site" evidence="1">
    <location>
        <position position="157"/>
    </location>
    <ligand>
        <name>[4Fe-4S] cluster</name>
        <dbReference type="ChEBI" id="CHEBI:49883"/>
        <label>2</label>
        <note>4Fe-4S-S-AdoMet</note>
    </ligand>
</feature>
<feature type="binding site" evidence="1">
    <location>
        <position position="161"/>
    </location>
    <ligand>
        <name>[4Fe-4S] cluster</name>
        <dbReference type="ChEBI" id="CHEBI:49883"/>
        <label>2</label>
        <note>4Fe-4S-S-AdoMet</note>
    </ligand>
</feature>
<feature type="binding site" evidence="1">
    <location>
        <position position="164"/>
    </location>
    <ligand>
        <name>[4Fe-4S] cluster</name>
        <dbReference type="ChEBI" id="CHEBI:49883"/>
        <label>2</label>
        <note>4Fe-4S-S-AdoMet</note>
    </ligand>
</feature>
<dbReference type="EC" id="2.8.4.3" evidence="1"/>
<dbReference type="EMBL" id="CP001029">
    <property type="protein sequence ID" value="ACB81550.1"/>
    <property type="molecule type" value="Genomic_DNA"/>
</dbReference>
<dbReference type="RefSeq" id="WP_012455267.1">
    <property type="nucleotide sequence ID" value="NC_010725.1"/>
</dbReference>
<dbReference type="SMR" id="B1ZJR5"/>
<dbReference type="STRING" id="441620.Mpop_3399"/>
<dbReference type="KEGG" id="mpo:Mpop_3399"/>
<dbReference type="eggNOG" id="COG0621">
    <property type="taxonomic scope" value="Bacteria"/>
</dbReference>
<dbReference type="HOGENOM" id="CLU_018697_2_0_5"/>
<dbReference type="OrthoDB" id="9805215at2"/>
<dbReference type="Proteomes" id="UP000007136">
    <property type="component" value="Chromosome"/>
</dbReference>
<dbReference type="GO" id="GO:0005829">
    <property type="term" value="C:cytosol"/>
    <property type="evidence" value="ECO:0007669"/>
    <property type="project" value="TreeGrafter"/>
</dbReference>
<dbReference type="GO" id="GO:0051539">
    <property type="term" value="F:4 iron, 4 sulfur cluster binding"/>
    <property type="evidence" value="ECO:0007669"/>
    <property type="project" value="UniProtKB-UniRule"/>
</dbReference>
<dbReference type="GO" id="GO:0046872">
    <property type="term" value="F:metal ion binding"/>
    <property type="evidence" value="ECO:0007669"/>
    <property type="project" value="UniProtKB-KW"/>
</dbReference>
<dbReference type="GO" id="GO:0035597">
    <property type="term" value="F:N6-isopentenyladenosine methylthiotransferase activity"/>
    <property type="evidence" value="ECO:0007669"/>
    <property type="project" value="TreeGrafter"/>
</dbReference>
<dbReference type="CDD" id="cd01335">
    <property type="entry name" value="Radical_SAM"/>
    <property type="match status" value="1"/>
</dbReference>
<dbReference type="FunFam" id="3.40.50.12160:FF:000003">
    <property type="entry name" value="CDK5 regulatory subunit-associated protein 1"/>
    <property type="match status" value="1"/>
</dbReference>
<dbReference type="FunFam" id="3.80.30.20:FF:000001">
    <property type="entry name" value="tRNA-2-methylthio-N(6)-dimethylallyladenosine synthase 2"/>
    <property type="match status" value="1"/>
</dbReference>
<dbReference type="Gene3D" id="3.40.50.12160">
    <property type="entry name" value="Methylthiotransferase, N-terminal domain"/>
    <property type="match status" value="1"/>
</dbReference>
<dbReference type="Gene3D" id="3.80.30.20">
    <property type="entry name" value="tm_1862 like domain"/>
    <property type="match status" value="1"/>
</dbReference>
<dbReference type="HAMAP" id="MF_01864">
    <property type="entry name" value="tRNA_metthiotr_MiaB"/>
    <property type="match status" value="1"/>
</dbReference>
<dbReference type="InterPro" id="IPR006638">
    <property type="entry name" value="Elp3/MiaA/NifB-like_rSAM"/>
</dbReference>
<dbReference type="InterPro" id="IPR005839">
    <property type="entry name" value="Methylthiotransferase"/>
</dbReference>
<dbReference type="InterPro" id="IPR020612">
    <property type="entry name" value="Methylthiotransferase_CS"/>
</dbReference>
<dbReference type="InterPro" id="IPR013848">
    <property type="entry name" value="Methylthiotransferase_N"/>
</dbReference>
<dbReference type="InterPro" id="IPR038135">
    <property type="entry name" value="Methylthiotransferase_N_sf"/>
</dbReference>
<dbReference type="InterPro" id="IPR006463">
    <property type="entry name" value="MiaB_methiolase"/>
</dbReference>
<dbReference type="InterPro" id="IPR007197">
    <property type="entry name" value="rSAM"/>
</dbReference>
<dbReference type="InterPro" id="IPR023404">
    <property type="entry name" value="rSAM_horseshoe"/>
</dbReference>
<dbReference type="InterPro" id="IPR002792">
    <property type="entry name" value="TRAM_dom"/>
</dbReference>
<dbReference type="NCBIfam" id="TIGR01574">
    <property type="entry name" value="miaB-methiolase"/>
    <property type="match status" value="1"/>
</dbReference>
<dbReference type="NCBIfam" id="TIGR00089">
    <property type="entry name" value="MiaB/RimO family radical SAM methylthiotransferase"/>
    <property type="match status" value="1"/>
</dbReference>
<dbReference type="PANTHER" id="PTHR43020">
    <property type="entry name" value="CDK5 REGULATORY SUBUNIT-ASSOCIATED PROTEIN 1"/>
    <property type="match status" value="1"/>
</dbReference>
<dbReference type="PANTHER" id="PTHR43020:SF2">
    <property type="entry name" value="MITOCHONDRIAL TRNA METHYLTHIOTRANSFERASE CDK5RAP1"/>
    <property type="match status" value="1"/>
</dbReference>
<dbReference type="Pfam" id="PF04055">
    <property type="entry name" value="Radical_SAM"/>
    <property type="match status" value="1"/>
</dbReference>
<dbReference type="Pfam" id="PF01938">
    <property type="entry name" value="TRAM"/>
    <property type="match status" value="1"/>
</dbReference>
<dbReference type="Pfam" id="PF00919">
    <property type="entry name" value="UPF0004"/>
    <property type="match status" value="1"/>
</dbReference>
<dbReference type="SFLD" id="SFLDF00273">
    <property type="entry name" value="(dimethylallyl)adenosine_tRNA"/>
    <property type="match status" value="1"/>
</dbReference>
<dbReference type="SFLD" id="SFLDG01082">
    <property type="entry name" value="B12-binding_domain_containing"/>
    <property type="match status" value="1"/>
</dbReference>
<dbReference type="SFLD" id="SFLDS00029">
    <property type="entry name" value="Radical_SAM"/>
    <property type="match status" value="1"/>
</dbReference>
<dbReference type="SMART" id="SM00729">
    <property type="entry name" value="Elp3"/>
    <property type="match status" value="1"/>
</dbReference>
<dbReference type="SUPFAM" id="SSF102114">
    <property type="entry name" value="Radical SAM enzymes"/>
    <property type="match status" value="1"/>
</dbReference>
<dbReference type="PROSITE" id="PS51449">
    <property type="entry name" value="MTTASE_N"/>
    <property type="match status" value="1"/>
</dbReference>
<dbReference type="PROSITE" id="PS01278">
    <property type="entry name" value="MTTASE_RADICAL"/>
    <property type="match status" value="1"/>
</dbReference>
<dbReference type="PROSITE" id="PS51918">
    <property type="entry name" value="RADICAL_SAM"/>
    <property type="match status" value="1"/>
</dbReference>
<dbReference type="PROSITE" id="PS50926">
    <property type="entry name" value="TRAM"/>
    <property type="match status" value="1"/>
</dbReference>
<comment type="function">
    <text evidence="1">Catalyzes the methylthiolation of N6-(dimethylallyl)adenosine (i(6)A), leading to the formation of 2-methylthio-N6-(dimethylallyl)adenosine (ms(2)i(6)A) at position 37 in tRNAs that read codons beginning with uridine.</text>
</comment>
<comment type="catalytic activity">
    <reaction evidence="1">
        <text>N(6)-dimethylallyladenosine(37) in tRNA + (sulfur carrier)-SH + AH2 + 2 S-adenosyl-L-methionine = 2-methylsulfanyl-N(6)-dimethylallyladenosine(37) in tRNA + (sulfur carrier)-H + 5'-deoxyadenosine + L-methionine + A + S-adenosyl-L-homocysteine + 2 H(+)</text>
        <dbReference type="Rhea" id="RHEA:37067"/>
        <dbReference type="Rhea" id="RHEA-COMP:10375"/>
        <dbReference type="Rhea" id="RHEA-COMP:10376"/>
        <dbReference type="Rhea" id="RHEA-COMP:14737"/>
        <dbReference type="Rhea" id="RHEA-COMP:14739"/>
        <dbReference type="ChEBI" id="CHEBI:13193"/>
        <dbReference type="ChEBI" id="CHEBI:15378"/>
        <dbReference type="ChEBI" id="CHEBI:17319"/>
        <dbReference type="ChEBI" id="CHEBI:17499"/>
        <dbReference type="ChEBI" id="CHEBI:29917"/>
        <dbReference type="ChEBI" id="CHEBI:57844"/>
        <dbReference type="ChEBI" id="CHEBI:57856"/>
        <dbReference type="ChEBI" id="CHEBI:59789"/>
        <dbReference type="ChEBI" id="CHEBI:64428"/>
        <dbReference type="ChEBI" id="CHEBI:74415"/>
        <dbReference type="ChEBI" id="CHEBI:74417"/>
        <dbReference type="EC" id="2.8.4.3"/>
    </reaction>
</comment>
<comment type="cofactor">
    <cofactor evidence="1">
        <name>[4Fe-4S] cluster</name>
        <dbReference type="ChEBI" id="CHEBI:49883"/>
    </cofactor>
    <text evidence="1">Binds 2 [4Fe-4S] clusters. One cluster is coordinated with 3 cysteines and an exchangeable S-adenosyl-L-methionine.</text>
</comment>
<comment type="subunit">
    <text evidence="1">Monomer.</text>
</comment>
<comment type="subcellular location">
    <subcellularLocation>
        <location evidence="1">Cytoplasm</location>
    </subcellularLocation>
</comment>
<comment type="similarity">
    <text evidence="1">Belongs to the methylthiotransferase family. MiaB subfamily.</text>
</comment>
<evidence type="ECO:0000255" key="1">
    <source>
        <dbReference type="HAMAP-Rule" id="MF_01864"/>
    </source>
</evidence>
<evidence type="ECO:0000255" key="2">
    <source>
        <dbReference type="PROSITE-ProRule" id="PRU01266"/>
    </source>
</evidence>
<name>MIAB_METPB</name>
<sequence length="446" mass="48091">MKKAYVKSYGCQMNAYDAGRMADVLAAEGYSATESVEEADVVVLNTCHIREKAAEKVYSELGRLRVLKGERAESGQDTRIVVAGCVAQAEGREILSRAPAVDVVVGPQSYHRLPDLLRQSRETRVVDTEFPVEDKFDHLPARRNRGVTGFLTVQEGCDKFCAFCVVPYTRGAEVSRSVAAVVEEARRLVEGGVREITLIGQNVNAYHGDGPDGAPATLGHLMDALSAVPGLLRLRYTTSHPNDFADDLIAAHAGNPLVMPYLHLPVQSGSDRILHAMNRRHTGDAYRRLIERIRTARPDIALSSDFIVGFPGESDADFAETMRLVAEIGFAAAFSFKYSPRAGTPAAEREDAVPEAVKTERLAALQQLLDQQRHAFNAAAVGTVAEILVEKTGRHPGQVAGKTPHLQAVQFDAPASTIGTLVPVRITRAGSNSLFGEVLEGAAAAA</sequence>
<gene>
    <name evidence="1" type="primary">miaB</name>
    <name type="ordered locus">Mpop_3399</name>
</gene>
<keyword id="KW-0004">4Fe-4S</keyword>
<keyword id="KW-0963">Cytoplasm</keyword>
<keyword id="KW-0408">Iron</keyword>
<keyword id="KW-0411">Iron-sulfur</keyword>
<keyword id="KW-0479">Metal-binding</keyword>
<keyword id="KW-0949">S-adenosyl-L-methionine</keyword>
<keyword id="KW-0808">Transferase</keyword>
<keyword id="KW-0819">tRNA processing</keyword>